<feature type="chain" id="PRO_0000304371" description="1-aminocyclopropane-1-carboxylate deaminase">
    <location>
        <begin position="1"/>
        <end position="338"/>
    </location>
</feature>
<feature type="active site" description="Nucleophile" evidence="1">
    <location>
        <position position="78"/>
    </location>
</feature>
<feature type="modified residue" description="N6-(pyridoxal phosphate)lysine" evidence="1">
    <location>
        <position position="51"/>
    </location>
</feature>
<evidence type="ECO:0000255" key="1">
    <source>
        <dbReference type="HAMAP-Rule" id="MF_00807"/>
    </source>
</evidence>
<proteinExistence type="inferred from homology"/>
<gene>
    <name evidence="1" type="primary">acdS</name>
    <name type="ordered locus">Bcen2424_3374</name>
</gene>
<sequence>MNLQRFPRYPLTFGPTPIQPLKRLSAHLGGKVDLYAKREDCNSGLAFGGNKTRKLEYLVPDALAQGADTLVSIGGVQSNQTRQVAAVAAHLGMKCVLVQEHWVNYEDPVYDRVGNIQLSRMMGADVRLVSDGFDIGIRRSWEEAMESVRQAGGKPYPIPAGCSEHPLGGLGFVGFAEEVRAQEAQLGFKFDYVVVCSVTGSTQAGMVVGFAADGRADRVIGIDASAKPEQTREQITRIARHTAELVELGRDIVEQDVVLDTRYGGPEYGLPSDGTLEAIRLCARLEGMLTDPVYEGKSMHGMIDKVRLGEFEPGSKVLYAHLGGAPALSAYNGIFRNG</sequence>
<name>1A1D_BURCH</name>
<keyword id="KW-0378">Hydrolase</keyword>
<keyword id="KW-0663">Pyridoxal phosphate</keyword>
<comment type="function">
    <text evidence="1">Catalyzes a cyclopropane ring-opening reaction, the irreversible conversion of 1-aminocyclopropane-1-carboxylate (ACC) to ammonia and alpha-ketobutyrate. Allows growth on ACC as a nitrogen source.</text>
</comment>
<comment type="catalytic activity">
    <reaction evidence="1">
        <text>1-aminocyclopropane-1-carboxylate + H2O = 2-oxobutanoate + NH4(+)</text>
        <dbReference type="Rhea" id="RHEA:16933"/>
        <dbReference type="ChEBI" id="CHEBI:15377"/>
        <dbReference type="ChEBI" id="CHEBI:16763"/>
        <dbReference type="ChEBI" id="CHEBI:28938"/>
        <dbReference type="ChEBI" id="CHEBI:58360"/>
        <dbReference type="EC" id="3.5.99.7"/>
    </reaction>
</comment>
<comment type="cofactor">
    <cofactor evidence="1">
        <name>pyridoxal 5'-phosphate</name>
        <dbReference type="ChEBI" id="CHEBI:597326"/>
    </cofactor>
</comment>
<comment type="subunit">
    <text evidence="1">Homotrimer.</text>
</comment>
<comment type="similarity">
    <text evidence="1">Belongs to the ACC deaminase/D-cysteine desulfhydrase family.</text>
</comment>
<protein>
    <recommendedName>
        <fullName evidence="1">1-aminocyclopropane-1-carboxylate deaminase</fullName>
        <shortName evidence="1">ACC deaminase</shortName>
        <shortName evidence="1">ACCD</shortName>
        <ecNumber evidence="1">3.5.99.7</ecNumber>
    </recommendedName>
</protein>
<accession>A0AXI7</accession>
<organism>
    <name type="scientific">Burkholderia cenocepacia (strain HI2424)</name>
    <dbReference type="NCBI Taxonomy" id="331272"/>
    <lineage>
        <taxon>Bacteria</taxon>
        <taxon>Pseudomonadati</taxon>
        <taxon>Pseudomonadota</taxon>
        <taxon>Betaproteobacteria</taxon>
        <taxon>Burkholderiales</taxon>
        <taxon>Burkholderiaceae</taxon>
        <taxon>Burkholderia</taxon>
        <taxon>Burkholderia cepacia complex</taxon>
    </lineage>
</organism>
<reference key="1">
    <citation type="submission" date="2006-08" db="EMBL/GenBank/DDBJ databases">
        <title>Complete sequence of chromosome 2 of Burkholderia cenocepacia HI2424.</title>
        <authorList>
            <person name="Copeland A."/>
            <person name="Lucas S."/>
            <person name="Lapidus A."/>
            <person name="Barry K."/>
            <person name="Detter J.C."/>
            <person name="Glavina del Rio T."/>
            <person name="Hammon N."/>
            <person name="Israni S."/>
            <person name="Pitluck S."/>
            <person name="Chain P."/>
            <person name="Malfatti S."/>
            <person name="Shin M."/>
            <person name="Vergez L."/>
            <person name="Schmutz J."/>
            <person name="Larimer F."/>
            <person name="Land M."/>
            <person name="Hauser L."/>
            <person name="Kyrpides N."/>
            <person name="Kim E."/>
            <person name="LiPuma J.J."/>
            <person name="Gonzalez C.F."/>
            <person name="Konstantinidis K."/>
            <person name="Tiedje J.M."/>
            <person name="Richardson P."/>
        </authorList>
    </citation>
    <scope>NUCLEOTIDE SEQUENCE [LARGE SCALE GENOMIC DNA]</scope>
    <source>
        <strain>HI2424</strain>
    </source>
</reference>
<dbReference type="EC" id="3.5.99.7" evidence="1"/>
<dbReference type="EMBL" id="CP000459">
    <property type="protein sequence ID" value="ABK10113.1"/>
    <property type="molecule type" value="Genomic_DNA"/>
</dbReference>
<dbReference type="RefSeq" id="WP_011548424.1">
    <property type="nucleotide sequence ID" value="NC_008543.1"/>
</dbReference>
<dbReference type="SMR" id="A0AXI7"/>
<dbReference type="KEGG" id="bch:Bcen2424_3374"/>
<dbReference type="HOGENOM" id="CLU_048897_2_1_4"/>
<dbReference type="GO" id="GO:0008660">
    <property type="term" value="F:1-aminocyclopropane-1-carboxylate deaminase activity"/>
    <property type="evidence" value="ECO:0007669"/>
    <property type="project" value="UniProtKB-UniRule"/>
</dbReference>
<dbReference type="GO" id="GO:0019148">
    <property type="term" value="F:D-cysteine desulfhydrase activity"/>
    <property type="evidence" value="ECO:0007669"/>
    <property type="project" value="TreeGrafter"/>
</dbReference>
<dbReference type="GO" id="GO:0030170">
    <property type="term" value="F:pyridoxal phosphate binding"/>
    <property type="evidence" value="ECO:0007669"/>
    <property type="project" value="InterPro"/>
</dbReference>
<dbReference type="GO" id="GO:0018871">
    <property type="term" value="P:1-aminocyclopropane-1-carboxylate metabolic process"/>
    <property type="evidence" value="ECO:0007669"/>
    <property type="project" value="UniProtKB-UniRule"/>
</dbReference>
<dbReference type="GO" id="GO:0009310">
    <property type="term" value="P:amine catabolic process"/>
    <property type="evidence" value="ECO:0007669"/>
    <property type="project" value="InterPro"/>
</dbReference>
<dbReference type="CDD" id="cd06449">
    <property type="entry name" value="ACCD"/>
    <property type="match status" value="1"/>
</dbReference>
<dbReference type="FunFam" id="3.40.50.1100:FF:000048">
    <property type="entry name" value="1-aminocyclopropane-1-carboxylate deaminase"/>
    <property type="match status" value="1"/>
</dbReference>
<dbReference type="Gene3D" id="3.40.50.1100">
    <property type="match status" value="2"/>
</dbReference>
<dbReference type="HAMAP" id="MF_00807">
    <property type="entry name" value="ACC_deaminase"/>
    <property type="match status" value="1"/>
</dbReference>
<dbReference type="InterPro" id="IPR027278">
    <property type="entry name" value="ACCD_DCysDesulf"/>
</dbReference>
<dbReference type="InterPro" id="IPR005965">
    <property type="entry name" value="ACP_carboxylate_deaminase"/>
</dbReference>
<dbReference type="InterPro" id="IPR020601">
    <property type="entry name" value="ACP_carboxylate_deaminase_bac"/>
</dbReference>
<dbReference type="InterPro" id="IPR001926">
    <property type="entry name" value="TrpB-like_PALP"/>
</dbReference>
<dbReference type="InterPro" id="IPR036052">
    <property type="entry name" value="TrpB-like_PALP_sf"/>
</dbReference>
<dbReference type="NCBIfam" id="TIGR01274">
    <property type="entry name" value="ACC_deam"/>
    <property type="match status" value="1"/>
</dbReference>
<dbReference type="PANTHER" id="PTHR43780">
    <property type="entry name" value="1-AMINOCYCLOPROPANE-1-CARBOXYLATE DEAMINASE-RELATED"/>
    <property type="match status" value="1"/>
</dbReference>
<dbReference type="PANTHER" id="PTHR43780:SF2">
    <property type="entry name" value="1-AMINOCYCLOPROPANE-1-CARBOXYLATE DEAMINASE-RELATED"/>
    <property type="match status" value="1"/>
</dbReference>
<dbReference type="Pfam" id="PF00291">
    <property type="entry name" value="PALP"/>
    <property type="match status" value="1"/>
</dbReference>
<dbReference type="PIRSF" id="PIRSF006278">
    <property type="entry name" value="ACCD_DCysDesulf"/>
    <property type="match status" value="1"/>
</dbReference>
<dbReference type="SUPFAM" id="SSF53686">
    <property type="entry name" value="Tryptophan synthase beta subunit-like PLP-dependent enzymes"/>
    <property type="match status" value="1"/>
</dbReference>